<proteinExistence type="inferred from homology"/>
<comment type="function">
    <text evidence="2">Component of the transcription regulatory histone acetylation (HAT) complex SAGA, a multiprotein complex that activates transcription by remodeling chromatin and mediating histone acetylation and deubiquitination. Within the SAGA complex, participates in a subcomplex that specifically deubiquitinates histone H2B. The SAGA complex is recruited to specific gene promoters by activators, where it is required for transcription.</text>
</comment>
<comment type="subunit">
    <text evidence="1">Component of some SAGA transcription coactivator-HAT complexes. Within the SAGA complex, participates in a subcomplex of SAGA called the DUB module (deubiquitination module) (By similarity).</text>
</comment>
<comment type="subcellular location">
    <subcellularLocation>
        <location evidence="2">Nucleus</location>
    </subcellularLocation>
</comment>
<comment type="domain">
    <text evidence="2">The long N-terminal helix forms part of the 'assembly lobe' of the SAGA deubiquitination module.</text>
</comment>
<comment type="domain">
    <text evidence="2">The C-terminal SGF11-type zinc-finger domain forms part of the 'catalytic lobe' of the SAGA deubiquitination module.</text>
</comment>
<comment type="similarity">
    <text evidence="2">Belongs to the SGF11 family.</text>
</comment>
<evidence type="ECO:0000250" key="1"/>
<evidence type="ECO:0000255" key="2">
    <source>
        <dbReference type="HAMAP-Rule" id="MF_03047"/>
    </source>
</evidence>
<evidence type="ECO:0000256" key="3">
    <source>
        <dbReference type="SAM" id="MobiDB-lite"/>
    </source>
</evidence>
<accession>Q7PXG4</accession>
<protein>
    <recommendedName>
        <fullName evidence="2">SAGA-associated factor 11 homolog</fullName>
    </recommendedName>
</protein>
<organism>
    <name type="scientific">Anopheles gambiae</name>
    <name type="common">African malaria mosquito</name>
    <dbReference type="NCBI Taxonomy" id="7165"/>
    <lineage>
        <taxon>Eukaryota</taxon>
        <taxon>Metazoa</taxon>
        <taxon>Ecdysozoa</taxon>
        <taxon>Arthropoda</taxon>
        <taxon>Hexapoda</taxon>
        <taxon>Insecta</taxon>
        <taxon>Pterygota</taxon>
        <taxon>Neoptera</taxon>
        <taxon>Endopterygota</taxon>
        <taxon>Diptera</taxon>
        <taxon>Nematocera</taxon>
        <taxon>Culicoidea</taxon>
        <taxon>Culicidae</taxon>
        <taxon>Anophelinae</taxon>
        <taxon>Anopheles</taxon>
    </lineage>
</organism>
<name>SGF11_ANOGA</name>
<sequence length="182" mass="20312">MSENDGIHIEYVDEQELKREFRRFMSDPETREKAANYLYESLVDETILGIAYEVHHANKTGSGAAVEGEPEDSKPYTIVDQPDTDVFGSSNTKKAIDCHCPNCNRIVAASRFAPHLEKCMGMGRNSSRIASRRIANTRDVGTGNYFGGDEDDEDDADWSGEKRKKKISQVRTNGSKKNGKTS</sequence>
<keyword id="KW-0010">Activator</keyword>
<keyword id="KW-0156">Chromatin regulator</keyword>
<keyword id="KW-0479">Metal-binding</keyword>
<keyword id="KW-0539">Nucleus</keyword>
<keyword id="KW-1185">Reference proteome</keyword>
<keyword id="KW-0804">Transcription</keyword>
<keyword id="KW-0805">Transcription regulation</keyword>
<keyword id="KW-0862">Zinc</keyword>
<keyword id="KW-0863">Zinc-finger</keyword>
<reference key="1">
    <citation type="journal article" date="2002" name="Science">
        <title>The genome sequence of the malaria mosquito Anopheles gambiae.</title>
        <authorList>
            <person name="Holt R.A."/>
            <person name="Subramanian G.M."/>
            <person name="Halpern A."/>
            <person name="Sutton G.G."/>
            <person name="Charlab R."/>
            <person name="Nusskern D.R."/>
            <person name="Wincker P."/>
            <person name="Clark A.G."/>
            <person name="Ribeiro J.M.C."/>
            <person name="Wides R."/>
            <person name="Salzberg S.L."/>
            <person name="Loftus B.J."/>
            <person name="Yandell M.D."/>
            <person name="Majoros W.H."/>
            <person name="Rusch D.B."/>
            <person name="Lai Z."/>
            <person name="Kraft C.L."/>
            <person name="Abril J.F."/>
            <person name="Anthouard V."/>
            <person name="Arensburger P."/>
            <person name="Atkinson P.W."/>
            <person name="Baden H."/>
            <person name="de Berardinis V."/>
            <person name="Baldwin D."/>
            <person name="Benes V."/>
            <person name="Biedler J."/>
            <person name="Blass C."/>
            <person name="Bolanos R."/>
            <person name="Boscus D."/>
            <person name="Barnstead M."/>
            <person name="Cai S."/>
            <person name="Center A."/>
            <person name="Chaturverdi K."/>
            <person name="Christophides G.K."/>
            <person name="Chrystal M.A.M."/>
            <person name="Clamp M."/>
            <person name="Cravchik A."/>
            <person name="Curwen V."/>
            <person name="Dana A."/>
            <person name="Delcher A."/>
            <person name="Dew I."/>
            <person name="Evans C.A."/>
            <person name="Flanigan M."/>
            <person name="Grundschober-Freimoser A."/>
            <person name="Friedli L."/>
            <person name="Gu Z."/>
            <person name="Guan P."/>
            <person name="Guigo R."/>
            <person name="Hillenmeyer M.E."/>
            <person name="Hladun S.L."/>
            <person name="Hogan J.R."/>
            <person name="Hong Y.S."/>
            <person name="Hoover J."/>
            <person name="Jaillon O."/>
            <person name="Ke Z."/>
            <person name="Kodira C.D."/>
            <person name="Kokoza E."/>
            <person name="Koutsos A."/>
            <person name="Letunic I."/>
            <person name="Levitsky A.A."/>
            <person name="Liang Y."/>
            <person name="Lin J.-J."/>
            <person name="Lobo N.F."/>
            <person name="Lopez J.R."/>
            <person name="Malek J.A."/>
            <person name="McIntosh T.C."/>
            <person name="Meister S."/>
            <person name="Miller J.R."/>
            <person name="Mobarry C."/>
            <person name="Mongin E."/>
            <person name="Murphy S.D."/>
            <person name="O'Brochta D.A."/>
            <person name="Pfannkoch C."/>
            <person name="Qi R."/>
            <person name="Regier M.A."/>
            <person name="Remington K."/>
            <person name="Shao H."/>
            <person name="Sharakhova M.V."/>
            <person name="Sitter C.D."/>
            <person name="Shetty J."/>
            <person name="Smith T.J."/>
            <person name="Strong R."/>
            <person name="Sun J."/>
            <person name="Thomasova D."/>
            <person name="Ton L.Q."/>
            <person name="Topalis P."/>
            <person name="Tu Z.J."/>
            <person name="Unger M.F."/>
            <person name="Walenz B."/>
            <person name="Wang A.H."/>
            <person name="Wang J."/>
            <person name="Wang M."/>
            <person name="Wang X."/>
            <person name="Woodford K.J."/>
            <person name="Wortman J.R."/>
            <person name="Wu M."/>
            <person name="Yao A."/>
            <person name="Zdobnov E.M."/>
            <person name="Zhang H."/>
            <person name="Zhao Q."/>
            <person name="Zhao S."/>
            <person name="Zhu S.C."/>
            <person name="Zhimulev I."/>
            <person name="Coluzzi M."/>
            <person name="della Torre A."/>
            <person name="Roth C.W."/>
            <person name="Louis C."/>
            <person name="Kalush F."/>
            <person name="Mural R.J."/>
            <person name="Myers E.W."/>
            <person name="Adams M.D."/>
            <person name="Smith H.O."/>
            <person name="Broder S."/>
            <person name="Gardner M.J."/>
            <person name="Fraser C.M."/>
            <person name="Birney E."/>
            <person name="Bork P."/>
            <person name="Brey P.T."/>
            <person name="Venter J.C."/>
            <person name="Weissenbach J."/>
            <person name="Kafatos F.C."/>
            <person name="Collins F.H."/>
            <person name="Hoffman S.L."/>
        </authorList>
    </citation>
    <scope>NUCLEOTIDE SEQUENCE [LARGE SCALE GENOMIC DNA]</scope>
    <source>
        <strain>PEST</strain>
    </source>
</reference>
<gene>
    <name evidence="2" type="primary">Sgf11</name>
    <name type="ORF">AGAP001393</name>
</gene>
<feature type="chain" id="PRO_0000367519" description="SAGA-associated factor 11 homolog">
    <location>
        <begin position="1"/>
        <end position="182"/>
    </location>
</feature>
<feature type="zinc finger region" description="SGF11-type" evidence="2">
    <location>
        <begin position="98"/>
        <end position="119"/>
    </location>
</feature>
<feature type="region of interest" description="Disordered" evidence="3">
    <location>
        <begin position="61"/>
        <end position="84"/>
    </location>
</feature>
<feature type="region of interest" description="Disordered" evidence="3">
    <location>
        <begin position="133"/>
        <end position="182"/>
    </location>
</feature>
<feature type="compositionally biased region" description="Acidic residues" evidence="3">
    <location>
        <begin position="148"/>
        <end position="158"/>
    </location>
</feature>
<dbReference type="EMBL" id="AAAB01008987">
    <property type="protein sequence ID" value="EAA01107.5"/>
    <property type="molecule type" value="Genomic_DNA"/>
</dbReference>
<dbReference type="SMR" id="Q7PXG4"/>
<dbReference type="FunCoup" id="Q7PXG4">
    <property type="interactions" value="238"/>
</dbReference>
<dbReference type="STRING" id="7165.Q7PXG4"/>
<dbReference type="PaxDb" id="7165-AGAP001393-PA"/>
<dbReference type="EnsemblMetazoa" id="AGAP001393-RA">
    <property type="protein sequence ID" value="AGAP001393-PA"/>
    <property type="gene ID" value="AGAP001393"/>
</dbReference>
<dbReference type="GeneID" id="1281785"/>
<dbReference type="KEGG" id="aga:1281785"/>
<dbReference type="CTD" id="40035"/>
<dbReference type="VEuPathDB" id="VectorBase:AGAMI1_013539"/>
<dbReference type="VEuPathDB" id="VectorBase:AGAP001393"/>
<dbReference type="eggNOG" id="KOG2612">
    <property type="taxonomic scope" value="Eukaryota"/>
</dbReference>
<dbReference type="HOGENOM" id="CLU_100743_0_0_1"/>
<dbReference type="InParanoid" id="Q7PXG4"/>
<dbReference type="OMA" id="RMCEMPN"/>
<dbReference type="PhylomeDB" id="Q7PXG4"/>
<dbReference type="Proteomes" id="UP000007062">
    <property type="component" value="Chromosome 2R"/>
</dbReference>
<dbReference type="GO" id="GO:0071819">
    <property type="term" value="C:DUBm complex"/>
    <property type="evidence" value="ECO:0007669"/>
    <property type="project" value="UniProtKB-UniRule"/>
</dbReference>
<dbReference type="GO" id="GO:0000124">
    <property type="term" value="C:SAGA complex"/>
    <property type="evidence" value="ECO:0007669"/>
    <property type="project" value="UniProtKB-UniRule"/>
</dbReference>
<dbReference type="GO" id="GO:0003713">
    <property type="term" value="F:transcription coactivator activity"/>
    <property type="evidence" value="ECO:0007669"/>
    <property type="project" value="UniProtKB-UniRule"/>
</dbReference>
<dbReference type="GO" id="GO:0008270">
    <property type="term" value="F:zinc ion binding"/>
    <property type="evidence" value="ECO:0007669"/>
    <property type="project" value="UniProtKB-UniRule"/>
</dbReference>
<dbReference type="GO" id="GO:0006325">
    <property type="term" value="P:chromatin organization"/>
    <property type="evidence" value="ECO:0007669"/>
    <property type="project" value="UniProtKB-KW"/>
</dbReference>
<dbReference type="FunFam" id="3.30.160.60:FF:000118">
    <property type="entry name" value="Ataxin-7-like protein 3"/>
    <property type="match status" value="1"/>
</dbReference>
<dbReference type="Gene3D" id="3.30.160.60">
    <property type="entry name" value="Classic Zinc Finger"/>
    <property type="match status" value="1"/>
</dbReference>
<dbReference type="HAMAP" id="MF_03047">
    <property type="entry name" value="Sgf11"/>
    <property type="match status" value="1"/>
</dbReference>
<dbReference type="InterPro" id="IPR013246">
    <property type="entry name" value="SAGA_su_Sgf11"/>
</dbReference>
<dbReference type="InterPro" id="IPR051078">
    <property type="entry name" value="SGF11"/>
</dbReference>
<dbReference type="PANTHER" id="PTHR46367">
    <property type="entry name" value="ATAXIN-7-LIKE PROTEIN 3"/>
    <property type="match status" value="1"/>
</dbReference>
<dbReference type="PANTHER" id="PTHR46367:SF1">
    <property type="entry name" value="ATAXIN-7-LIKE PROTEIN 3"/>
    <property type="match status" value="1"/>
</dbReference>
<dbReference type="Pfam" id="PF08209">
    <property type="entry name" value="Sgf11"/>
    <property type="match status" value="1"/>
</dbReference>